<proteinExistence type="inferred from homology"/>
<protein>
    <recommendedName>
        <fullName evidence="1">Holo-[acyl-carrier-protein] synthase</fullName>
        <shortName evidence="1">Holo-ACP synthase</shortName>
        <ecNumber evidence="1">2.7.8.7</ecNumber>
    </recommendedName>
    <alternativeName>
        <fullName evidence="1">4'-phosphopantetheinyl transferase AcpS</fullName>
    </alternativeName>
</protein>
<comment type="function">
    <text evidence="1">Transfers the 4'-phosphopantetheine moiety from coenzyme A to a Ser of acyl-carrier-protein.</text>
</comment>
<comment type="catalytic activity">
    <reaction evidence="1">
        <text>apo-[ACP] + CoA = holo-[ACP] + adenosine 3',5'-bisphosphate + H(+)</text>
        <dbReference type="Rhea" id="RHEA:12068"/>
        <dbReference type="Rhea" id="RHEA-COMP:9685"/>
        <dbReference type="Rhea" id="RHEA-COMP:9690"/>
        <dbReference type="ChEBI" id="CHEBI:15378"/>
        <dbReference type="ChEBI" id="CHEBI:29999"/>
        <dbReference type="ChEBI" id="CHEBI:57287"/>
        <dbReference type="ChEBI" id="CHEBI:58343"/>
        <dbReference type="ChEBI" id="CHEBI:64479"/>
        <dbReference type="EC" id="2.7.8.7"/>
    </reaction>
</comment>
<comment type="cofactor">
    <cofactor evidence="1">
        <name>Mg(2+)</name>
        <dbReference type="ChEBI" id="CHEBI:18420"/>
    </cofactor>
</comment>
<comment type="subcellular location">
    <subcellularLocation>
        <location evidence="1">Cytoplasm</location>
    </subcellularLocation>
</comment>
<comment type="similarity">
    <text evidence="1">Belongs to the P-Pant transferase superfamily. AcpS family.</text>
</comment>
<reference key="1">
    <citation type="journal article" date="2009" name="PLoS Genet.">
        <title>Organised genome dynamics in the Escherichia coli species results in highly diverse adaptive paths.</title>
        <authorList>
            <person name="Touchon M."/>
            <person name="Hoede C."/>
            <person name="Tenaillon O."/>
            <person name="Barbe V."/>
            <person name="Baeriswyl S."/>
            <person name="Bidet P."/>
            <person name="Bingen E."/>
            <person name="Bonacorsi S."/>
            <person name="Bouchier C."/>
            <person name="Bouvet O."/>
            <person name="Calteau A."/>
            <person name="Chiapello H."/>
            <person name="Clermont O."/>
            <person name="Cruveiller S."/>
            <person name="Danchin A."/>
            <person name="Diard M."/>
            <person name="Dossat C."/>
            <person name="Karoui M.E."/>
            <person name="Frapy E."/>
            <person name="Garry L."/>
            <person name="Ghigo J.M."/>
            <person name="Gilles A.M."/>
            <person name="Johnson J."/>
            <person name="Le Bouguenec C."/>
            <person name="Lescat M."/>
            <person name="Mangenot S."/>
            <person name="Martinez-Jehanne V."/>
            <person name="Matic I."/>
            <person name="Nassif X."/>
            <person name="Oztas S."/>
            <person name="Petit M.A."/>
            <person name="Pichon C."/>
            <person name="Rouy Z."/>
            <person name="Ruf C.S."/>
            <person name="Schneider D."/>
            <person name="Tourret J."/>
            <person name="Vacherie B."/>
            <person name="Vallenet D."/>
            <person name="Medigue C."/>
            <person name="Rocha E.P.C."/>
            <person name="Denamur E."/>
        </authorList>
    </citation>
    <scope>NUCLEOTIDE SEQUENCE [LARGE SCALE GENOMIC DNA]</scope>
    <source>
        <strain>ED1a</strain>
    </source>
</reference>
<evidence type="ECO:0000255" key="1">
    <source>
        <dbReference type="HAMAP-Rule" id="MF_00101"/>
    </source>
</evidence>
<name>ACPS_ECO81</name>
<sequence length="126" mass="14152">MAILGLGTDIVEIARIEAVIARSGERLARRVLSDNEWEIWKTHHQPVRFLAKRFAVKEAAAKAFGTGIRNGLAFNQFEVFNDELGKPRLRLWGEALKLAEKLGVVNMHVTLADERHYACATVIIES</sequence>
<gene>
    <name evidence="1" type="primary">acpS</name>
    <name type="ordered locus">ECED1_2992</name>
</gene>
<organism>
    <name type="scientific">Escherichia coli O81 (strain ED1a)</name>
    <dbReference type="NCBI Taxonomy" id="585397"/>
    <lineage>
        <taxon>Bacteria</taxon>
        <taxon>Pseudomonadati</taxon>
        <taxon>Pseudomonadota</taxon>
        <taxon>Gammaproteobacteria</taxon>
        <taxon>Enterobacterales</taxon>
        <taxon>Enterobacteriaceae</taxon>
        <taxon>Escherichia</taxon>
    </lineage>
</organism>
<accession>B7MYJ4</accession>
<feature type="chain" id="PRO_1000118809" description="Holo-[acyl-carrier-protein] synthase">
    <location>
        <begin position="1"/>
        <end position="126"/>
    </location>
</feature>
<feature type="binding site" evidence="1">
    <location>
        <position position="9"/>
    </location>
    <ligand>
        <name>Mg(2+)</name>
        <dbReference type="ChEBI" id="CHEBI:18420"/>
    </ligand>
</feature>
<feature type="binding site" evidence="1">
    <location>
        <position position="58"/>
    </location>
    <ligand>
        <name>Mg(2+)</name>
        <dbReference type="ChEBI" id="CHEBI:18420"/>
    </ligand>
</feature>
<keyword id="KW-0963">Cytoplasm</keyword>
<keyword id="KW-0275">Fatty acid biosynthesis</keyword>
<keyword id="KW-0276">Fatty acid metabolism</keyword>
<keyword id="KW-0444">Lipid biosynthesis</keyword>
<keyword id="KW-0443">Lipid metabolism</keyword>
<keyword id="KW-0460">Magnesium</keyword>
<keyword id="KW-0479">Metal-binding</keyword>
<keyword id="KW-0808">Transferase</keyword>
<dbReference type="EC" id="2.7.8.7" evidence="1"/>
<dbReference type="EMBL" id="CU928162">
    <property type="protein sequence ID" value="CAR09160.2"/>
    <property type="molecule type" value="Genomic_DNA"/>
</dbReference>
<dbReference type="RefSeq" id="WP_000986038.1">
    <property type="nucleotide sequence ID" value="NC_011745.1"/>
</dbReference>
<dbReference type="SMR" id="B7MYJ4"/>
<dbReference type="KEGG" id="ecq:ECED1_2992"/>
<dbReference type="HOGENOM" id="CLU_089696_3_1_6"/>
<dbReference type="Proteomes" id="UP000000748">
    <property type="component" value="Chromosome"/>
</dbReference>
<dbReference type="GO" id="GO:0005737">
    <property type="term" value="C:cytoplasm"/>
    <property type="evidence" value="ECO:0007669"/>
    <property type="project" value="UniProtKB-SubCell"/>
</dbReference>
<dbReference type="GO" id="GO:0008897">
    <property type="term" value="F:holo-[acyl-carrier-protein] synthase activity"/>
    <property type="evidence" value="ECO:0007669"/>
    <property type="project" value="UniProtKB-UniRule"/>
</dbReference>
<dbReference type="GO" id="GO:0000287">
    <property type="term" value="F:magnesium ion binding"/>
    <property type="evidence" value="ECO:0007669"/>
    <property type="project" value="UniProtKB-UniRule"/>
</dbReference>
<dbReference type="GO" id="GO:0006633">
    <property type="term" value="P:fatty acid biosynthetic process"/>
    <property type="evidence" value="ECO:0007669"/>
    <property type="project" value="UniProtKB-UniRule"/>
</dbReference>
<dbReference type="FunFam" id="3.90.470.20:FF:000001">
    <property type="entry name" value="Holo-[acyl-carrier-protein] synthase"/>
    <property type="match status" value="1"/>
</dbReference>
<dbReference type="Gene3D" id="3.90.470.20">
    <property type="entry name" value="4'-phosphopantetheinyl transferase domain"/>
    <property type="match status" value="1"/>
</dbReference>
<dbReference type="HAMAP" id="MF_00101">
    <property type="entry name" value="AcpS"/>
    <property type="match status" value="1"/>
</dbReference>
<dbReference type="InterPro" id="IPR008278">
    <property type="entry name" value="4-PPantetheinyl_Trfase_dom"/>
</dbReference>
<dbReference type="InterPro" id="IPR037143">
    <property type="entry name" value="4-PPantetheinyl_Trfase_dom_sf"/>
</dbReference>
<dbReference type="InterPro" id="IPR002582">
    <property type="entry name" value="ACPS"/>
</dbReference>
<dbReference type="InterPro" id="IPR004568">
    <property type="entry name" value="Ppantetheine-prot_Trfase_dom"/>
</dbReference>
<dbReference type="NCBIfam" id="TIGR00516">
    <property type="entry name" value="acpS"/>
    <property type="match status" value="1"/>
</dbReference>
<dbReference type="NCBIfam" id="TIGR00556">
    <property type="entry name" value="pantethn_trn"/>
    <property type="match status" value="1"/>
</dbReference>
<dbReference type="Pfam" id="PF01648">
    <property type="entry name" value="ACPS"/>
    <property type="match status" value="1"/>
</dbReference>
<dbReference type="SUPFAM" id="SSF56214">
    <property type="entry name" value="4'-phosphopantetheinyl transferase"/>
    <property type="match status" value="1"/>
</dbReference>